<accession>Q0BMU5</accession>
<keyword id="KW-0489">Methyltransferase</keyword>
<keyword id="KW-0949">S-adenosyl-L-methionine</keyword>
<keyword id="KW-0808">Transferase</keyword>
<keyword id="KW-0819">tRNA processing</keyword>
<protein>
    <recommendedName>
        <fullName evidence="2">tRNA (guanine-N(7)-)-methyltransferase</fullName>
        <ecNumber evidence="2">2.1.1.33</ecNumber>
    </recommendedName>
    <alternativeName>
        <fullName evidence="2">tRNA (guanine(46)-N(7))-methyltransferase</fullName>
    </alternativeName>
    <alternativeName>
        <fullName evidence="2">tRNA(m7G46)-methyltransferase</fullName>
    </alternativeName>
</protein>
<comment type="function">
    <text evidence="2">Catalyzes the formation of N(7)-methylguanine at position 46 (m7G46) in tRNA.</text>
</comment>
<comment type="catalytic activity">
    <reaction evidence="2">
        <text>guanosine(46) in tRNA + S-adenosyl-L-methionine = N(7)-methylguanosine(46) in tRNA + S-adenosyl-L-homocysteine</text>
        <dbReference type="Rhea" id="RHEA:42708"/>
        <dbReference type="Rhea" id="RHEA-COMP:10188"/>
        <dbReference type="Rhea" id="RHEA-COMP:10189"/>
        <dbReference type="ChEBI" id="CHEBI:57856"/>
        <dbReference type="ChEBI" id="CHEBI:59789"/>
        <dbReference type="ChEBI" id="CHEBI:74269"/>
        <dbReference type="ChEBI" id="CHEBI:74480"/>
        <dbReference type="EC" id="2.1.1.33"/>
    </reaction>
</comment>
<comment type="pathway">
    <text evidence="2">tRNA modification; N(7)-methylguanine-tRNA biosynthesis.</text>
</comment>
<comment type="similarity">
    <text evidence="2">Belongs to the class I-like SAM-binding methyltransferase superfamily. TrmB family.</text>
</comment>
<evidence type="ECO:0000250" key="1"/>
<evidence type="ECO:0000255" key="2">
    <source>
        <dbReference type="HAMAP-Rule" id="MF_01057"/>
    </source>
</evidence>
<reference key="1">
    <citation type="journal article" date="2006" name="J. Bacteriol.">
        <title>Chromosome rearrangement and diversification of Francisella tularensis revealed by the type B (OSU18) genome sequence.</title>
        <authorList>
            <person name="Petrosino J.F."/>
            <person name="Xiang Q."/>
            <person name="Karpathy S.E."/>
            <person name="Jiang H."/>
            <person name="Yerrapragada S."/>
            <person name="Liu Y."/>
            <person name="Gioia J."/>
            <person name="Hemphill L."/>
            <person name="Gonzalez A."/>
            <person name="Raghavan T.M."/>
            <person name="Uzman A."/>
            <person name="Fox G.E."/>
            <person name="Highlander S."/>
            <person name="Reichard M."/>
            <person name="Morton R.J."/>
            <person name="Clinkenbeard K.D."/>
            <person name="Weinstock G.M."/>
        </authorList>
    </citation>
    <scope>NUCLEOTIDE SEQUENCE [LARGE SCALE GENOMIC DNA]</scope>
    <source>
        <strain>OSU18</strain>
    </source>
</reference>
<dbReference type="EC" id="2.1.1.33" evidence="2"/>
<dbReference type="EMBL" id="CP000437">
    <property type="protein sequence ID" value="ABI82589.1"/>
    <property type="molecule type" value="Genomic_DNA"/>
</dbReference>
<dbReference type="RefSeq" id="WP_003015034.1">
    <property type="nucleotide sequence ID" value="NC_017463.1"/>
</dbReference>
<dbReference type="SMR" id="Q0BMU5"/>
<dbReference type="KEGG" id="fth:FTH_0631"/>
<dbReference type="UniPathway" id="UPA00989"/>
<dbReference type="GO" id="GO:0043527">
    <property type="term" value="C:tRNA methyltransferase complex"/>
    <property type="evidence" value="ECO:0007669"/>
    <property type="project" value="TreeGrafter"/>
</dbReference>
<dbReference type="GO" id="GO:0008176">
    <property type="term" value="F:tRNA (guanine(46)-N7)-methyltransferase activity"/>
    <property type="evidence" value="ECO:0007669"/>
    <property type="project" value="UniProtKB-UniRule"/>
</dbReference>
<dbReference type="Gene3D" id="3.40.50.150">
    <property type="entry name" value="Vaccinia Virus protein VP39"/>
    <property type="match status" value="1"/>
</dbReference>
<dbReference type="HAMAP" id="MF_01057">
    <property type="entry name" value="tRNA_methyltr_TrmB"/>
    <property type="match status" value="1"/>
</dbReference>
<dbReference type="InterPro" id="IPR029063">
    <property type="entry name" value="SAM-dependent_MTases_sf"/>
</dbReference>
<dbReference type="InterPro" id="IPR003358">
    <property type="entry name" value="tRNA_(Gua-N-7)_MeTrfase_Trmb"/>
</dbReference>
<dbReference type="InterPro" id="IPR055361">
    <property type="entry name" value="tRNA_methyltr_TrmB_bact"/>
</dbReference>
<dbReference type="NCBIfam" id="TIGR00091">
    <property type="entry name" value="tRNA (guanosine(46)-N7)-methyltransferase TrmB"/>
    <property type="match status" value="1"/>
</dbReference>
<dbReference type="PANTHER" id="PTHR23417">
    <property type="entry name" value="3-DEOXY-D-MANNO-OCTULOSONIC-ACID TRANSFERASE/TRNA GUANINE-N 7 - -METHYLTRANSFERASE"/>
    <property type="match status" value="1"/>
</dbReference>
<dbReference type="PANTHER" id="PTHR23417:SF14">
    <property type="entry name" value="PENTACOTRIPEPTIDE-REPEAT REGION OF PRORP DOMAIN-CONTAINING PROTEIN"/>
    <property type="match status" value="1"/>
</dbReference>
<dbReference type="Pfam" id="PF02390">
    <property type="entry name" value="Methyltransf_4"/>
    <property type="match status" value="1"/>
</dbReference>
<dbReference type="SUPFAM" id="SSF53335">
    <property type="entry name" value="S-adenosyl-L-methionine-dependent methyltransferases"/>
    <property type="match status" value="1"/>
</dbReference>
<dbReference type="PROSITE" id="PS51625">
    <property type="entry name" value="SAM_MT_TRMB"/>
    <property type="match status" value="1"/>
</dbReference>
<feature type="chain" id="PRO_0000288150" description="tRNA (guanine-N(7)-)-methyltransferase">
    <location>
        <begin position="1"/>
        <end position="229"/>
    </location>
</feature>
<feature type="region of interest" description="Interaction with RNA" evidence="2">
    <location>
        <begin position="143"/>
        <end position="148"/>
    </location>
</feature>
<feature type="active site" evidence="1">
    <location>
        <position position="137"/>
    </location>
</feature>
<feature type="binding site" evidence="2">
    <location>
        <position position="62"/>
    </location>
    <ligand>
        <name>S-adenosyl-L-methionine</name>
        <dbReference type="ChEBI" id="CHEBI:59789"/>
    </ligand>
</feature>
<feature type="binding site" evidence="2">
    <location>
        <position position="87"/>
    </location>
    <ligand>
        <name>S-adenosyl-L-methionine</name>
        <dbReference type="ChEBI" id="CHEBI:59789"/>
    </ligand>
</feature>
<feature type="binding site" evidence="2">
    <location>
        <position position="114"/>
    </location>
    <ligand>
        <name>S-adenosyl-L-methionine</name>
        <dbReference type="ChEBI" id="CHEBI:59789"/>
    </ligand>
</feature>
<feature type="binding site" evidence="2">
    <location>
        <position position="137"/>
    </location>
    <ligand>
        <name>S-adenosyl-L-methionine</name>
        <dbReference type="ChEBI" id="CHEBI:59789"/>
    </ligand>
</feature>
<feature type="binding site" evidence="2">
    <location>
        <position position="141"/>
    </location>
    <ligand>
        <name>substrate</name>
    </ligand>
</feature>
<feature type="binding site" evidence="2">
    <location>
        <position position="173"/>
    </location>
    <ligand>
        <name>substrate</name>
    </ligand>
</feature>
<feature type="binding site" evidence="2">
    <location>
        <begin position="208"/>
        <end position="211"/>
    </location>
    <ligand>
        <name>substrate</name>
    </ligand>
</feature>
<name>TRMB_FRATO</name>
<organism>
    <name type="scientific">Francisella tularensis subsp. holarctica (strain OSU18)</name>
    <dbReference type="NCBI Taxonomy" id="393011"/>
    <lineage>
        <taxon>Bacteria</taxon>
        <taxon>Pseudomonadati</taxon>
        <taxon>Pseudomonadota</taxon>
        <taxon>Gammaproteobacteria</taxon>
        <taxon>Thiotrichales</taxon>
        <taxon>Francisellaceae</taxon>
        <taxon>Francisella</taxon>
    </lineage>
</organism>
<gene>
    <name evidence="2" type="primary">trmB</name>
    <name type="ordered locus">FTH_0631</name>
</gene>
<sequence length="229" mass="26385">MCDKSKENLRQIKSYVQRAGRVTKKQQQALDNYAAKYLIEYAKDRKLDFTEIFANTNDVVLEIGFGMGGSLVEMALANPAKNYLGIEVHKAGVGNILYEIEHQNIANLLVMSHDAVEILENMIADQSLASIQVYFPDPWHKKKHNKRRLVNQTNIDLFAKKLKVGGVFHYASDWLPYAEEVLELLENDSKYRNLYSGFAPRPEWRPLTKFEKRGQNLDHPISDILFEKI</sequence>
<proteinExistence type="inferred from homology"/>